<reference key="1">
    <citation type="journal article" date="2004" name="Nature">
        <title>The genome of Cryptosporidium hominis.</title>
        <authorList>
            <person name="Xu P."/>
            <person name="Widmer G."/>
            <person name="Wang Y."/>
            <person name="Ozaki L.S."/>
            <person name="Alves J.M."/>
            <person name="Serrano M.G."/>
            <person name="Puiu D."/>
            <person name="Manque P."/>
            <person name="Akiyoshi D."/>
            <person name="Mackey A.J."/>
            <person name="Pearson W.R."/>
            <person name="Dear P.H."/>
            <person name="Bankier A.T."/>
            <person name="Peterson D.L."/>
            <person name="Abrahamsen M.S."/>
            <person name="Kapur V."/>
            <person name="Tzipori S."/>
            <person name="Buck G.A."/>
        </authorList>
    </citation>
    <scope>NUCLEOTIDE SEQUENCE [LARGE SCALE GENOMIC DNA]</scope>
    <source>
        <strain>TU502</strain>
    </source>
</reference>
<proteinExistence type="inferred from homology"/>
<protein>
    <recommendedName>
        <fullName evidence="1">Small ribosomal subunit protein eS1</fullName>
    </recommendedName>
    <alternativeName>
        <fullName evidence="2">40S ribosomal protein S3a</fullName>
    </alternativeName>
</protein>
<accession>Q5CP76</accession>
<feature type="initiator methionine" description="Removed" evidence="1">
    <location>
        <position position="1"/>
    </location>
</feature>
<feature type="chain" id="PRO_0000389335" description="Small ribosomal subunit protein eS1">
    <location>
        <begin position="2"/>
        <end position="262"/>
    </location>
</feature>
<evidence type="ECO:0000255" key="1">
    <source>
        <dbReference type="HAMAP-Rule" id="MF_03122"/>
    </source>
</evidence>
<evidence type="ECO:0000305" key="2"/>
<keyword id="KW-0963">Cytoplasm</keyword>
<keyword id="KW-0687">Ribonucleoprotein</keyword>
<keyword id="KW-0689">Ribosomal protein</keyword>
<dbReference type="EMBL" id="AAEL01000002">
    <property type="protein sequence ID" value="EAL38400.1"/>
    <property type="molecule type" value="Genomic_DNA"/>
</dbReference>
<dbReference type="RefSeq" id="XP_668637.1">
    <property type="nucleotide sequence ID" value="XM_663545.1"/>
</dbReference>
<dbReference type="SMR" id="Q5CP76"/>
<dbReference type="GeneID" id="3413511"/>
<dbReference type="KEGG" id="cho:Chro.40360"/>
<dbReference type="VEuPathDB" id="CryptoDB:Chro.40360"/>
<dbReference type="VEuPathDB" id="CryptoDB:ChTU502y2012_408g0375"/>
<dbReference type="VEuPathDB" id="CryptoDB:CHUDEA4_3160"/>
<dbReference type="VEuPathDB" id="CryptoDB:GY17_00001790"/>
<dbReference type="OrthoDB" id="9834376at2759"/>
<dbReference type="GO" id="GO:0022627">
    <property type="term" value="C:cytosolic small ribosomal subunit"/>
    <property type="evidence" value="ECO:0007669"/>
    <property type="project" value="UniProtKB-UniRule"/>
</dbReference>
<dbReference type="GO" id="GO:0003735">
    <property type="term" value="F:structural constituent of ribosome"/>
    <property type="evidence" value="ECO:0007669"/>
    <property type="project" value="UniProtKB-UniRule"/>
</dbReference>
<dbReference type="GO" id="GO:0006412">
    <property type="term" value="P:translation"/>
    <property type="evidence" value="ECO:0007669"/>
    <property type="project" value="UniProtKB-UniRule"/>
</dbReference>
<dbReference type="HAMAP" id="MF_03122">
    <property type="entry name" value="Ribosomal_eS1_euk"/>
    <property type="match status" value="1"/>
</dbReference>
<dbReference type="InterPro" id="IPR001593">
    <property type="entry name" value="Ribosomal_eS1"/>
</dbReference>
<dbReference type="InterPro" id="IPR018281">
    <property type="entry name" value="Ribosomal_eS1_CS"/>
</dbReference>
<dbReference type="InterPro" id="IPR027500">
    <property type="entry name" value="Ribosomal_eS1_euk"/>
</dbReference>
<dbReference type="PANTHER" id="PTHR11830">
    <property type="entry name" value="40S RIBOSOMAL PROTEIN S3A"/>
    <property type="match status" value="1"/>
</dbReference>
<dbReference type="Pfam" id="PF01015">
    <property type="entry name" value="Ribosomal_S3Ae"/>
    <property type="match status" value="1"/>
</dbReference>
<dbReference type="SMART" id="SM01397">
    <property type="entry name" value="Ribosomal_S3Ae"/>
    <property type="match status" value="1"/>
</dbReference>
<dbReference type="PROSITE" id="PS01191">
    <property type="entry name" value="RIBOSOMAL_S3AE"/>
    <property type="match status" value="1"/>
</dbReference>
<sequence>MAIGKNKRISKGRKGGRKKVVDPLSRKEFYDLRAPSTFKVRNFGTTIASKNQGTKLAVDALRHRVYEVSLADLNNDEDQAFRKIKLQCEDIQGRTCLTEFHGMDMTRDKLCSLIRKYQTLIEAHCNVKTSDGYVLRLFCIAFTRRMADQVKSTCYAQTSQIRQIRKKMVEIITAEAEGTTLRDLVKKFIPESIGKEIEKACRHIFPLQHVFIRKVKVLSKPSFDVSRLMESHVGADGVEEKGTKVVSESNQATNLLTAEMKA</sequence>
<name>RS3A_CRYHO</name>
<comment type="subunit">
    <text evidence="1">Component of the small ribosomal subunit. Mature ribosomes consist of a small (40S) and a large (60S) subunit. The 40S subunit contains about 33 different proteins and 1 molecule of RNA (18S). The 60S subunit contains about 49 different proteins and 3 molecules of RNA (25S, 5.8S and 5S).</text>
</comment>
<comment type="subcellular location">
    <subcellularLocation>
        <location evidence="1">Cytoplasm</location>
    </subcellularLocation>
</comment>
<comment type="similarity">
    <text evidence="1">Belongs to the eukaryotic ribosomal protein eS1 family.</text>
</comment>
<organism>
    <name type="scientific">Cryptosporidium hominis</name>
    <dbReference type="NCBI Taxonomy" id="237895"/>
    <lineage>
        <taxon>Eukaryota</taxon>
        <taxon>Sar</taxon>
        <taxon>Alveolata</taxon>
        <taxon>Apicomplexa</taxon>
        <taxon>Conoidasida</taxon>
        <taxon>Coccidia</taxon>
        <taxon>Eucoccidiorida</taxon>
        <taxon>Eimeriorina</taxon>
        <taxon>Cryptosporidiidae</taxon>
        <taxon>Cryptosporidium</taxon>
    </lineage>
</organism>
<gene>
    <name type="ORF">Chro.40360</name>
</gene>